<gene>
    <name evidence="6" type="primary">esxA</name>
    <name type="ordered locus">MSMEG_0066</name>
    <name type="ordered locus">MSMEI_0067</name>
</gene>
<organism>
    <name type="scientific">Mycolicibacterium smegmatis (strain ATCC 700084 / mc(2)155)</name>
    <name type="common">Mycobacterium smegmatis</name>
    <dbReference type="NCBI Taxonomy" id="246196"/>
    <lineage>
        <taxon>Bacteria</taxon>
        <taxon>Bacillati</taxon>
        <taxon>Actinomycetota</taxon>
        <taxon>Actinomycetes</taxon>
        <taxon>Mycobacteriales</taxon>
        <taxon>Mycobacteriaceae</taxon>
        <taxon>Mycolicibacterium</taxon>
    </lineage>
</organism>
<accession>A0QNJ6</accession>
<feature type="chain" id="PRO_0000437932" description="ESAT-6-like protein EsxA">
    <location>
        <begin position="1"/>
        <end position="95"/>
    </location>
</feature>
<feature type="mutagenesis site" description="Forms pores in liposomes, responds to pH changes, changes residues to resemble M.tuberculosis protein." evidence="5">
    <original>TA</original>
    <variation>IH</variation>
    <location>
        <begin position="25"/>
        <end position="26"/>
    </location>
</feature>
<feature type="mutagenesis site" description="Does not form pores in liposomes, like wild-type protein." evidence="5">
    <original>A</original>
    <variation>H</variation>
    <location>
        <position position="26"/>
    </location>
</feature>
<name>ESXA_MYCS2</name>
<keyword id="KW-1185">Reference proteome</keyword>
<keyword id="KW-0964">Secreted</keyword>
<proteinExistence type="evidence at protein level"/>
<comment type="function">
    <text evidence="4 5">An exported protein. Unlike its M.tuberculosis counterpart has poor pore forming ability in artificial liposomes, does not undergo conformational change at acidic pH (PubMed:23150662). Mutation of 2 residues to those found in M.tuberculosis (25-TA-26 to IH) alters the properties of this protein so that it inserts into liposomes at acidic pH, forming pores, like its M.tuberculosis counterpart (PubMed:26801203).</text>
</comment>
<comment type="subunit">
    <text evidence="2 3 4">Forms a tight 1:1 complex with EsxB (PubMed:19854905, PubMed:20085764, PubMed:23150662). An artificial EsxA-EsxB heterodimer interacts with EspA (PubMed:19854905).</text>
</comment>
<comment type="subcellular location">
    <subcellularLocation>
        <location evidence="1">Secreted</location>
    </subcellularLocation>
    <text evidence="1 7">Probably secreted via the ESX-1 / type VII secretion system (T7SS). Accumulates in the cell and is secreted when grown in Saunton's medium, when grown in 7H9 medium protein only accumulates intracellularly (PubMed:15687187).</text>
</comment>
<comment type="disruption phenotype">
    <text evidence="1">No secretion of EsxB, very little EsxB protein accumulates intracellularly (PubMed:15687187).</text>
</comment>
<comment type="miscellaneous">
    <text evidence="2">To improve over-expression in E.coli the proteins were cloned as a single protein in the (non-native) order esxA-esxB with a cleavable thrombin tag (PubMed:19854905).</text>
</comment>
<comment type="similarity">
    <text evidence="7">Belongs to the WXG100 family. ESAT-6 subfamily.</text>
</comment>
<protein>
    <recommendedName>
        <fullName evidence="6">ESAT-6-like protein EsxA</fullName>
    </recommendedName>
</protein>
<sequence>MTEQVWNFAGIEGGASEIHGAVSTTAGLLDEGKASLTTLASAWGGTGSEAYQAVQARWDSTSNELNLALQNLAQTISEAGQTMAQTEAGVTGMFA</sequence>
<evidence type="ECO:0000269" key="1">
    <source>
    </source>
</evidence>
<evidence type="ECO:0000269" key="2">
    <source>
    </source>
</evidence>
<evidence type="ECO:0000269" key="3">
    <source>
    </source>
</evidence>
<evidence type="ECO:0000269" key="4">
    <source>
    </source>
</evidence>
<evidence type="ECO:0000269" key="5">
    <source>
    </source>
</evidence>
<evidence type="ECO:0000303" key="6">
    <source>
    </source>
</evidence>
<evidence type="ECO:0000305" key="7"/>
<reference key="1">
    <citation type="submission" date="2006-10" db="EMBL/GenBank/DDBJ databases">
        <authorList>
            <person name="Fleischmann R.D."/>
            <person name="Dodson R.J."/>
            <person name="Haft D.H."/>
            <person name="Merkel J.S."/>
            <person name="Nelson W.C."/>
            <person name="Fraser C.M."/>
        </authorList>
    </citation>
    <scope>NUCLEOTIDE SEQUENCE [LARGE SCALE GENOMIC DNA]</scope>
    <source>
        <strain>ATCC 700084 / mc(2)155</strain>
    </source>
</reference>
<reference key="2">
    <citation type="journal article" date="2007" name="Genome Biol.">
        <title>Interrupted coding sequences in Mycobacterium smegmatis: authentic mutations or sequencing errors?</title>
        <authorList>
            <person name="Deshayes C."/>
            <person name="Perrodou E."/>
            <person name="Gallien S."/>
            <person name="Euphrasie D."/>
            <person name="Schaeffer C."/>
            <person name="Van-Dorsselaer A."/>
            <person name="Poch O."/>
            <person name="Lecompte O."/>
            <person name="Reyrat J.-M."/>
        </authorList>
    </citation>
    <scope>NUCLEOTIDE SEQUENCE [LARGE SCALE GENOMIC DNA]</scope>
    <source>
        <strain>ATCC 700084 / mc(2)155</strain>
    </source>
</reference>
<reference key="3">
    <citation type="journal article" date="2009" name="Genome Res.">
        <title>Ortho-proteogenomics: multiple proteomes investigation through orthology and a new MS-based protocol.</title>
        <authorList>
            <person name="Gallien S."/>
            <person name="Perrodou E."/>
            <person name="Carapito C."/>
            <person name="Deshayes C."/>
            <person name="Reyrat J.-M."/>
            <person name="Van Dorsselaer A."/>
            <person name="Poch O."/>
            <person name="Schaeffer C."/>
            <person name="Lecompte O."/>
        </authorList>
    </citation>
    <scope>NUCLEOTIDE SEQUENCE [LARGE SCALE GENOMIC DNA]</scope>
    <source>
        <strain>ATCC 700084 / mc(2)155</strain>
    </source>
</reference>
<reference key="4">
    <citation type="journal article" date="2005" name="J. Bacteriol.">
        <title>A protein secretion pathway critical for Mycobacterium tuberculosis virulence is conserved and functional in Mycobacterium smegmatis.</title>
        <authorList>
            <person name="Converse S.E."/>
            <person name="Cox J.S."/>
        </authorList>
    </citation>
    <scope>SUBCELLULAR LOCATION</scope>
    <scope>DISRUPTION PHENOTYPE</scope>
    <source>
        <strain>ATCC 700084 / mc(2)155</strain>
    </source>
</reference>
<reference key="5">
    <citation type="journal article" date="2010" name="J. Bacteriol.">
        <title>Conservation of structure and protein-protein interactions mediated by the secreted mycobacterial proteins EsxA, EsxB, and EspA.</title>
        <authorList>
            <person name="Callahan B."/>
            <person name="Nguyen K."/>
            <person name="Collins A."/>
            <person name="Valdes K."/>
            <person name="Caplow M."/>
            <person name="Crossman D.K."/>
            <person name="Steyn A.J."/>
            <person name="Eisele L."/>
            <person name="Derbyshire K.M."/>
        </authorList>
    </citation>
    <scope>SUBUNIT</scope>
</reference>
<reference key="6">
    <citation type="journal article" date="2010" name="FEBS Lett.">
        <title>Stoichiometric protein complex formation and over-expression using the prokaryotic native operon structure.</title>
        <authorList>
            <person name="Poulsen C."/>
            <person name="Holton S."/>
            <person name="Geerlof A."/>
            <person name="Wilmanns M."/>
            <person name="Song Y.H."/>
        </authorList>
    </citation>
    <scope>SUBUNIT</scope>
    <source>
        <strain>ATCC 700084 / mc(2)155</strain>
    </source>
</reference>
<reference key="7">
    <citation type="journal article" date="2012" name="J. Biol. Chem.">
        <title>Mycobacterium tuberculosis ESAT-6 exhibits a unique membrane-interacting activity that is not found in its ortholog from non-pathogenic Mycobacterium smegmatis.</title>
        <authorList>
            <person name="De Leon J."/>
            <person name="Jiang G."/>
            <person name="Ma Y."/>
            <person name="Rubin E."/>
            <person name="Fortune S."/>
            <person name="Sun J."/>
        </authorList>
    </citation>
    <scope>FUNCTION</scope>
    <scope>SUBUNIT</scope>
</reference>
<reference key="8">
    <citation type="journal article" date="2016" name="FEBS Lett.">
        <title>Characterization of differential pore-forming activities of ESAT-6 proteins from Mycobacterium tuberculosis and Mycobacterium smegmatis.</title>
        <authorList>
            <person name="Peng X."/>
            <person name="Jiang G."/>
            <person name="Liu W."/>
            <person name="Zhang Q."/>
            <person name="Qian W."/>
            <person name="Sun J."/>
        </authorList>
    </citation>
    <scope>FUNCTION</scope>
    <scope>MUTAGENESIS OF 25-THR-ALA-26 AND ALA-26</scope>
</reference>
<dbReference type="EMBL" id="CP000480">
    <property type="protein sequence ID" value="ABK75559.1"/>
    <property type="molecule type" value="Genomic_DNA"/>
</dbReference>
<dbReference type="EMBL" id="CP001663">
    <property type="protein sequence ID" value="AFP36549.1"/>
    <property type="molecule type" value="Genomic_DNA"/>
</dbReference>
<dbReference type="RefSeq" id="WP_003891394.1">
    <property type="nucleotide sequence ID" value="NZ_SIJM01000058.1"/>
</dbReference>
<dbReference type="RefSeq" id="YP_884484.1">
    <property type="nucleotide sequence ID" value="NC_008596.1"/>
</dbReference>
<dbReference type="SMR" id="A0QNJ6"/>
<dbReference type="STRING" id="246196.MSMEG_0066"/>
<dbReference type="PaxDb" id="246196-MSMEI_0067"/>
<dbReference type="KEGG" id="msb:LJ00_00330"/>
<dbReference type="KEGG" id="msg:MSMEI_0067"/>
<dbReference type="KEGG" id="msm:MSMEG_0066"/>
<dbReference type="PATRIC" id="fig|246196.19.peg.64"/>
<dbReference type="eggNOG" id="COG4842">
    <property type="taxonomic scope" value="Bacteria"/>
</dbReference>
<dbReference type="OrthoDB" id="3387628at2"/>
<dbReference type="Proteomes" id="UP000000757">
    <property type="component" value="Chromosome"/>
</dbReference>
<dbReference type="Proteomes" id="UP000006158">
    <property type="component" value="Chromosome"/>
</dbReference>
<dbReference type="GO" id="GO:0005576">
    <property type="term" value="C:extracellular region"/>
    <property type="evidence" value="ECO:0007669"/>
    <property type="project" value="UniProtKB-SubCell"/>
</dbReference>
<dbReference type="Gene3D" id="1.10.287.1060">
    <property type="entry name" value="ESAT-6-like"/>
    <property type="match status" value="1"/>
</dbReference>
<dbReference type="InterPro" id="IPR036689">
    <property type="entry name" value="ESAT-6-like_sf"/>
</dbReference>
<dbReference type="InterPro" id="IPR010310">
    <property type="entry name" value="T7SS_ESAT-6-like"/>
</dbReference>
<dbReference type="NCBIfam" id="TIGR03930">
    <property type="entry name" value="WXG100_ESAT6"/>
    <property type="match status" value="1"/>
</dbReference>
<dbReference type="Pfam" id="PF06013">
    <property type="entry name" value="WXG100"/>
    <property type="match status" value="1"/>
</dbReference>
<dbReference type="SUPFAM" id="SSF140453">
    <property type="entry name" value="EsxAB dimer-like"/>
    <property type="match status" value="1"/>
</dbReference>